<name>NACA_ASPTN</name>
<proteinExistence type="inferred from homology"/>
<keyword id="KW-0963">Cytoplasm</keyword>
<keyword id="KW-0539">Nucleus</keyword>
<keyword id="KW-0653">Protein transport</keyword>
<keyword id="KW-1185">Reference proteome</keyword>
<keyword id="KW-0813">Transport</keyword>
<gene>
    <name type="primary">egd2</name>
    <name type="ORF">ATEG_07080.1</name>
</gene>
<dbReference type="EMBL" id="CH476603">
    <property type="protein sequence ID" value="EAU32464.1"/>
    <property type="status" value="ALT_SEQ"/>
    <property type="molecule type" value="Genomic_DNA"/>
</dbReference>
<dbReference type="RefSeq" id="XP_001209766.1">
    <property type="nucleotide sequence ID" value="XM_001209766.1"/>
</dbReference>
<dbReference type="SMR" id="P0C2C7"/>
<dbReference type="STRING" id="341663.P0C2C7"/>
<dbReference type="eggNOG" id="KOG2239">
    <property type="taxonomic scope" value="Eukaryota"/>
</dbReference>
<dbReference type="eggNOG" id="KOG3366">
    <property type="taxonomic scope" value="Eukaryota"/>
</dbReference>
<dbReference type="OrthoDB" id="35799at2759"/>
<dbReference type="Proteomes" id="UP000007963">
    <property type="component" value="Unassembled WGS sequence"/>
</dbReference>
<dbReference type="GO" id="GO:0005854">
    <property type="term" value="C:nascent polypeptide-associated complex"/>
    <property type="evidence" value="ECO:0007669"/>
    <property type="project" value="InterPro"/>
</dbReference>
<dbReference type="GO" id="GO:0005634">
    <property type="term" value="C:nucleus"/>
    <property type="evidence" value="ECO:0007669"/>
    <property type="project" value="UniProtKB-SubCell"/>
</dbReference>
<dbReference type="GO" id="GO:0015031">
    <property type="term" value="P:protein transport"/>
    <property type="evidence" value="ECO:0007669"/>
    <property type="project" value="UniProtKB-KW"/>
</dbReference>
<dbReference type="CDD" id="cd22054">
    <property type="entry name" value="NAC_NACA"/>
    <property type="match status" value="1"/>
</dbReference>
<dbReference type="CDD" id="cd14358">
    <property type="entry name" value="UBA_NAC_euk"/>
    <property type="match status" value="1"/>
</dbReference>
<dbReference type="FunFam" id="2.20.70.30:FF:000002">
    <property type="entry name" value="Nascent polypeptide-associated complex (NAC), alpha subunit"/>
    <property type="match status" value="1"/>
</dbReference>
<dbReference type="FunFam" id="1.10.8.10:FF:000006">
    <property type="entry name" value="Putative nascent polypeptide-associated complex subunit alpha"/>
    <property type="match status" value="1"/>
</dbReference>
<dbReference type="Gene3D" id="1.10.8.10">
    <property type="entry name" value="DNA helicase RuvA subunit, C-terminal domain"/>
    <property type="match status" value="1"/>
</dbReference>
<dbReference type="Gene3D" id="2.20.70.30">
    <property type="entry name" value="Nascent polypeptide-associated complex domain"/>
    <property type="match status" value="1"/>
</dbReference>
<dbReference type="InterPro" id="IPR016641">
    <property type="entry name" value="EGD2/NACA0like"/>
</dbReference>
<dbReference type="InterPro" id="IPR044034">
    <property type="entry name" value="NAC-like_UBA"/>
</dbReference>
<dbReference type="InterPro" id="IPR038187">
    <property type="entry name" value="NAC_A/B_dom_sf"/>
</dbReference>
<dbReference type="InterPro" id="IPR002715">
    <property type="entry name" value="Nas_poly-pep-assoc_cplx_dom"/>
</dbReference>
<dbReference type="PANTHER" id="PTHR21713">
    <property type="entry name" value="NASCENT POLYPEPTIDE ASSOCIATED COMPLEX ALPHA SUBUNIT-RELATED"/>
    <property type="match status" value="1"/>
</dbReference>
<dbReference type="Pfam" id="PF01849">
    <property type="entry name" value="NAC"/>
    <property type="match status" value="1"/>
</dbReference>
<dbReference type="Pfam" id="PF19026">
    <property type="entry name" value="UBA_HYPK"/>
    <property type="match status" value="1"/>
</dbReference>
<dbReference type="PIRSF" id="PIRSF015901">
    <property type="entry name" value="NAC_alpha"/>
    <property type="match status" value="1"/>
</dbReference>
<dbReference type="SMART" id="SM01407">
    <property type="entry name" value="NAC"/>
    <property type="match status" value="1"/>
</dbReference>
<dbReference type="PROSITE" id="PS51151">
    <property type="entry name" value="NAC_AB"/>
    <property type="match status" value="1"/>
</dbReference>
<sequence>MADPRVEELPDEEVPKTNVEDAGSDSESEAGEEPTIPGGAAVAVHSRNEKKARKAIGKLGLKLVPGITRVTFRRPKNILFVINQPEVYRSPSSNTWIIFGEAKIEDLNAQAQASAAQQLAAQEAAQEHAGHEHEDILGKAKEPEAEKKEAEEDDGEEVDESGLEAKDIELVMAQANVSRKKAVKALRENDNDIVNSIMALSI</sequence>
<feature type="chain" id="PRO_0000273482" description="Nascent polypeptide-associated complex subunit alpha">
    <location>
        <begin position="1"/>
        <end position="202"/>
    </location>
</feature>
<feature type="domain" description="NAC-A/B" evidence="2">
    <location>
        <begin position="46"/>
        <end position="111"/>
    </location>
</feature>
<feature type="domain" description="UBA">
    <location>
        <begin position="163"/>
        <end position="202"/>
    </location>
</feature>
<feature type="region of interest" description="Disordered" evidence="3">
    <location>
        <begin position="1"/>
        <end position="44"/>
    </location>
</feature>
<feature type="region of interest" description="Disordered" evidence="3">
    <location>
        <begin position="118"/>
        <end position="165"/>
    </location>
</feature>
<feature type="compositionally biased region" description="Basic and acidic residues" evidence="3">
    <location>
        <begin position="1"/>
        <end position="19"/>
    </location>
</feature>
<feature type="compositionally biased region" description="Acidic residues" evidence="3">
    <location>
        <begin position="22"/>
        <end position="32"/>
    </location>
</feature>
<feature type="compositionally biased region" description="Basic and acidic residues" evidence="3">
    <location>
        <begin position="125"/>
        <end position="150"/>
    </location>
</feature>
<feature type="compositionally biased region" description="Acidic residues" evidence="3">
    <location>
        <begin position="151"/>
        <end position="162"/>
    </location>
</feature>
<organism>
    <name type="scientific">Aspergillus terreus (strain NIH 2624 / FGSC A1156)</name>
    <dbReference type="NCBI Taxonomy" id="341663"/>
    <lineage>
        <taxon>Eukaryota</taxon>
        <taxon>Fungi</taxon>
        <taxon>Dikarya</taxon>
        <taxon>Ascomycota</taxon>
        <taxon>Pezizomycotina</taxon>
        <taxon>Eurotiomycetes</taxon>
        <taxon>Eurotiomycetidae</taxon>
        <taxon>Eurotiales</taxon>
        <taxon>Aspergillaceae</taxon>
        <taxon>Aspergillus</taxon>
        <taxon>Aspergillus subgen. Circumdati</taxon>
    </lineage>
</organism>
<evidence type="ECO:0000250" key="1"/>
<evidence type="ECO:0000255" key="2">
    <source>
        <dbReference type="PROSITE-ProRule" id="PRU00507"/>
    </source>
</evidence>
<evidence type="ECO:0000256" key="3">
    <source>
        <dbReference type="SAM" id="MobiDB-lite"/>
    </source>
</evidence>
<evidence type="ECO:0000305" key="4"/>
<comment type="function">
    <text evidence="1">Component of the nascent polypeptide-associated complex (NAC), a dynamic component of the ribosomal exit tunnel, protecting the emerging polypeptides from interaction with other cytoplasmic proteins to ensure appropriate nascent protein targeting. The NAC complex also promotes mitochondrial protein import by enhancing productive ribosome interactions with the outer mitochondrial membrane and blocks the inappropriate interaction of ribosomes translating non-secretory nascent polypeptides with translocation sites in the membrane of the endoplasmic reticulum. Egd2 may also be involved in transcription regulation (By similarity).</text>
</comment>
<comment type="subunit">
    <text evidence="1">Part of the nascent polypeptide-associated complex (NAC), consisting of egd2 and egd1. NAC associates with ribosomes via egd1 (By similarity).</text>
</comment>
<comment type="subcellular location">
    <subcellularLocation>
        <location evidence="1">Cytoplasm</location>
    </subcellularLocation>
    <subcellularLocation>
        <location evidence="1">Nucleus</location>
    </subcellularLocation>
    <text evidence="1">Predominantly cytoplasmic, may also transiently localize to the nucleus.</text>
</comment>
<comment type="similarity">
    <text evidence="4">Belongs to the NAC-alpha family.</text>
</comment>
<comment type="sequence caution" evidence="4">
    <conflict type="erroneous gene model prediction">
        <sequence resource="EMBL-CDS" id="EAU32464"/>
    </conflict>
    <text>The predicted gene ATEG_07080 has been split into 2 genes: ATEG_07080.1 and ATEG_07080.2.</text>
</comment>
<accession>P0C2C7</accession>
<accession>Q0CGW2</accession>
<reference key="1">
    <citation type="submission" date="2005-09" db="EMBL/GenBank/DDBJ databases">
        <title>Annotation of the Aspergillus terreus NIH2624 genome.</title>
        <authorList>
            <person name="Birren B.W."/>
            <person name="Lander E.S."/>
            <person name="Galagan J.E."/>
            <person name="Nusbaum C."/>
            <person name="Devon K."/>
            <person name="Henn M."/>
            <person name="Ma L.-J."/>
            <person name="Jaffe D.B."/>
            <person name="Butler J."/>
            <person name="Alvarez P."/>
            <person name="Gnerre S."/>
            <person name="Grabherr M."/>
            <person name="Kleber M."/>
            <person name="Mauceli E.W."/>
            <person name="Brockman W."/>
            <person name="Rounsley S."/>
            <person name="Young S.K."/>
            <person name="LaButti K."/>
            <person name="Pushparaj V."/>
            <person name="DeCaprio D."/>
            <person name="Crawford M."/>
            <person name="Koehrsen M."/>
            <person name="Engels R."/>
            <person name="Montgomery P."/>
            <person name="Pearson M."/>
            <person name="Howarth C."/>
            <person name="Larson L."/>
            <person name="Luoma S."/>
            <person name="White J."/>
            <person name="Alvarado L."/>
            <person name="Kodira C.D."/>
            <person name="Zeng Q."/>
            <person name="Oleary S."/>
            <person name="Yandava C."/>
            <person name="Denning D.W."/>
            <person name="Nierman W.C."/>
            <person name="Milne T."/>
            <person name="Madden K."/>
        </authorList>
    </citation>
    <scope>NUCLEOTIDE SEQUENCE [LARGE SCALE GENOMIC DNA]</scope>
    <source>
        <strain>NIH 2624 / FGSC A1156</strain>
    </source>
</reference>
<protein>
    <recommendedName>
        <fullName>Nascent polypeptide-associated complex subunit alpha</fullName>
        <shortName>NAC-alpha</shortName>
    </recommendedName>
    <alternativeName>
        <fullName>Alpha-NAC</fullName>
    </alternativeName>
</protein>